<name>PYRB_RHOOB</name>
<sequence length="314" mass="33669">MKHLLSIADLTRESAVELLDEAERFEQALLGREVRKLPTLRGRTVMTVFFENSTRTRVSFEVAGKWMSADVINVSASSSSVSKGESLRDTAMTLRAAGADALIVRHPASGAAHQIASWTGRQDDGGPAVINAGDGTHEHPTQALLDALTLRQRLGDIEGKRIAIVGDILHSRVARSNALLLSMLGAEVVLVAPPTLLPVGVSSWPVSVAHSLDAELPGLDAVLMLRVQAERMNGGFFPSQREYSINYGLSEKRLALLPEHAVVLHPGPMLRGMEIASAVADSTRTAVLQQVTNGVHMRMAVLFRLLVGAEDVAG</sequence>
<protein>
    <recommendedName>
        <fullName evidence="1">Aspartate carbamoyltransferase catalytic subunit</fullName>
        <ecNumber evidence="1">2.1.3.2</ecNumber>
    </recommendedName>
    <alternativeName>
        <fullName evidence="1">Aspartate transcarbamylase</fullName>
        <shortName evidence="1">ATCase</shortName>
    </alternativeName>
</protein>
<feature type="chain" id="PRO_1000116154" description="Aspartate carbamoyltransferase catalytic subunit">
    <location>
        <begin position="1"/>
        <end position="314"/>
    </location>
</feature>
<feature type="binding site" evidence="1">
    <location>
        <position position="55"/>
    </location>
    <ligand>
        <name>carbamoyl phosphate</name>
        <dbReference type="ChEBI" id="CHEBI:58228"/>
    </ligand>
</feature>
<feature type="binding site" evidence="1">
    <location>
        <position position="56"/>
    </location>
    <ligand>
        <name>carbamoyl phosphate</name>
        <dbReference type="ChEBI" id="CHEBI:58228"/>
    </ligand>
</feature>
<feature type="binding site" evidence="1">
    <location>
        <position position="83"/>
    </location>
    <ligand>
        <name>L-aspartate</name>
        <dbReference type="ChEBI" id="CHEBI:29991"/>
    </ligand>
</feature>
<feature type="binding site" evidence="1">
    <location>
        <position position="105"/>
    </location>
    <ligand>
        <name>carbamoyl phosphate</name>
        <dbReference type="ChEBI" id="CHEBI:58228"/>
    </ligand>
</feature>
<feature type="binding site" evidence="1">
    <location>
        <position position="139"/>
    </location>
    <ligand>
        <name>carbamoyl phosphate</name>
        <dbReference type="ChEBI" id="CHEBI:58228"/>
    </ligand>
</feature>
<feature type="binding site" evidence="1">
    <location>
        <position position="142"/>
    </location>
    <ligand>
        <name>carbamoyl phosphate</name>
        <dbReference type="ChEBI" id="CHEBI:58228"/>
    </ligand>
</feature>
<feature type="binding site" evidence="1">
    <location>
        <position position="172"/>
    </location>
    <ligand>
        <name>L-aspartate</name>
        <dbReference type="ChEBI" id="CHEBI:29991"/>
    </ligand>
</feature>
<feature type="binding site" evidence="1">
    <location>
        <position position="226"/>
    </location>
    <ligand>
        <name>L-aspartate</name>
        <dbReference type="ChEBI" id="CHEBI:29991"/>
    </ligand>
</feature>
<feature type="binding site" evidence="1">
    <location>
        <position position="267"/>
    </location>
    <ligand>
        <name>carbamoyl phosphate</name>
        <dbReference type="ChEBI" id="CHEBI:58228"/>
    </ligand>
</feature>
<feature type="binding site" evidence="1">
    <location>
        <position position="268"/>
    </location>
    <ligand>
        <name>carbamoyl phosphate</name>
        <dbReference type="ChEBI" id="CHEBI:58228"/>
    </ligand>
</feature>
<keyword id="KW-0665">Pyrimidine biosynthesis</keyword>
<keyword id="KW-0808">Transferase</keyword>
<proteinExistence type="inferred from homology"/>
<comment type="function">
    <text evidence="1">Catalyzes the condensation of carbamoyl phosphate and aspartate to form carbamoyl aspartate and inorganic phosphate, the committed step in the de novo pyrimidine nucleotide biosynthesis pathway.</text>
</comment>
<comment type="catalytic activity">
    <reaction evidence="1">
        <text>carbamoyl phosphate + L-aspartate = N-carbamoyl-L-aspartate + phosphate + H(+)</text>
        <dbReference type="Rhea" id="RHEA:20013"/>
        <dbReference type="ChEBI" id="CHEBI:15378"/>
        <dbReference type="ChEBI" id="CHEBI:29991"/>
        <dbReference type="ChEBI" id="CHEBI:32814"/>
        <dbReference type="ChEBI" id="CHEBI:43474"/>
        <dbReference type="ChEBI" id="CHEBI:58228"/>
        <dbReference type="EC" id="2.1.3.2"/>
    </reaction>
</comment>
<comment type="pathway">
    <text evidence="1">Pyrimidine metabolism; UMP biosynthesis via de novo pathway; (S)-dihydroorotate from bicarbonate: step 2/3.</text>
</comment>
<comment type="subunit">
    <text evidence="1">Heterododecamer (2C3:3R2) of six catalytic PyrB chains organized as two trimers (C3), and six regulatory PyrI chains organized as three dimers (R2).</text>
</comment>
<comment type="similarity">
    <text evidence="1">Belongs to the aspartate/ornithine carbamoyltransferase superfamily. ATCase family.</text>
</comment>
<gene>
    <name evidence="1" type="primary">pyrB</name>
    <name type="ordered locus">ROP_69290</name>
</gene>
<evidence type="ECO:0000255" key="1">
    <source>
        <dbReference type="HAMAP-Rule" id="MF_00001"/>
    </source>
</evidence>
<dbReference type="EC" id="2.1.3.2" evidence="1"/>
<dbReference type="EMBL" id="AP011115">
    <property type="protein sequence ID" value="BAH55176.1"/>
    <property type="molecule type" value="Genomic_DNA"/>
</dbReference>
<dbReference type="RefSeq" id="WP_015890605.1">
    <property type="nucleotide sequence ID" value="NC_012522.1"/>
</dbReference>
<dbReference type="SMR" id="C1B4I7"/>
<dbReference type="STRING" id="632772.ROP_69290"/>
<dbReference type="KEGG" id="rop:ROP_69290"/>
<dbReference type="PATRIC" id="fig|632772.20.peg.7220"/>
<dbReference type="HOGENOM" id="CLU_043846_2_0_11"/>
<dbReference type="OrthoDB" id="9774690at2"/>
<dbReference type="UniPathway" id="UPA00070">
    <property type="reaction ID" value="UER00116"/>
</dbReference>
<dbReference type="Proteomes" id="UP000002212">
    <property type="component" value="Chromosome"/>
</dbReference>
<dbReference type="GO" id="GO:0005829">
    <property type="term" value="C:cytosol"/>
    <property type="evidence" value="ECO:0007669"/>
    <property type="project" value="TreeGrafter"/>
</dbReference>
<dbReference type="GO" id="GO:0016597">
    <property type="term" value="F:amino acid binding"/>
    <property type="evidence" value="ECO:0007669"/>
    <property type="project" value="InterPro"/>
</dbReference>
<dbReference type="GO" id="GO:0004070">
    <property type="term" value="F:aspartate carbamoyltransferase activity"/>
    <property type="evidence" value="ECO:0007669"/>
    <property type="project" value="UniProtKB-UniRule"/>
</dbReference>
<dbReference type="GO" id="GO:0006207">
    <property type="term" value="P:'de novo' pyrimidine nucleobase biosynthetic process"/>
    <property type="evidence" value="ECO:0007669"/>
    <property type="project" value="InterPro"/>
</dbReference>
<dbReference type="GO" id="GO:0044205">
    <property type="term" value="P:'de novo' UMP biosynthetic process"/>
    <property type="evidence" value="ECO:0007669"/>
    <property type="project" value="UniProtKB-UniRule"/>
</dbReference>
<dbReference type="GO" id="GO:0006520">
    <property type="term" value="P:amino acid metabolic process"/>
    <property type="evidence" value="ECO:0007669"/>
    <property type="project" value="InterPro"/>
</dbReference>
<dbReference type="FunFam" id="3.40.50.1370:FF:000007">
    <property type="entry name" value="Aspartate carbamoyltransferase"/>
    <property type="match status" value="1"/>
</dbReference>
<dbReference type="Gene3D" id="3.40.50.1370">
    <property type="entry name" value="Aspartate/ornithine carbamoyltransferase"/>
    <property type="match status" value="2"/>
</dbReference>
<dbReference type="HAMAP" id="MF_00001">
    <property type="entry name" value="Asp_carb_tr"/>
    <property type="match status" value="1"/>
</dbReference>
<dbReference type="InterPro" id="IPR006132">
    <property type="entry name" value="Asp/Orn_carbamoyltranf_P-bd"/>
</dbReference>
<dbReference type="InterPro" id="IPR006130">
    <property type="entry name" value="Asp/Orn_carbamoylTrfase"/>
</dbReference>
<dbReference type="InterPro" id="IPR036901">
    <property type="entry name" value="Asp/Orn_carbamoylTrfase_sf"/>
</dbReference>
<dbReference type="InterPro" id="IPR002082">
    <property type="entry name" value="Asp_carbamoyltransf"/>
</dbReference>
<dbReference type="InterPro" id="IPR006131">
    <property type="entry name" value="Asp_carbamoyltransf_Asp/Orn-bd"/>
</dbReference>
<dbReference type="NCBIfam" id="TIGR00670">
    <property type="entry name" value="asp_carb_tr"/>
    <property type="match status" value="1"/>
</dbReference>
<dbReference type="NCBIfam" id="NF002032">
    <property type="entry name" value="PRK00856.1"/>
    <property type="match status" value="1"/>
</dbReference>
<dbReference type="PANTHER" id="PTHR45753:SF6">
    <property type="entry name" value="ASPARTATE CARBAMOYLTRANSFERASE"/>
    <property type="match status" value="1"/>
</dbReference>
<dbReference type="PANTHER" id="PTHR45753">
    <property type="entry name" value="ORNITHINE CARBAMOYLTRANSFERASE, MITOCHONDRIAL"/>
    <property type="match status" value="1"/>
</dbReference>
<dbReference type="Pfam" id="PF00185">
    <property type="entry name" value="OTCace"/>
    <property type="match status" value="1"/>
</dbReference>
<dbReference type="Pfam" id="PF02729">
    <property type="entry name" value="OTCace_N"/>
    <property type="match status" value="1"/>
</dbReference>
<dbReference type="PRINTS" id="PR00100">
    <property type="entry name" value="AOTCASE"/>
</dbReference>
<dbReference type="PRINTS" id="PR00101">
    <property type="entry name" value="ATCASE"/>
</dbReference>
<dbReference type="SUPFAM" id="SSF53671">
    <property type="entry name" value="Aspartate/ornithine carbamoyltransferase"/>
    <property type="match status" value="1"/>
</dbReference>
<dbReference type="PROSITE" id="PS00097">
    <property type="entry name" value="CARBAMOYLTRANSFERASE"/>
    <property type="match status" value="1"/>
</dbReference>
<accession>C1B4I7</accession>
<organism>
    <name type="scientific">Rhodococcus opacus (strain B4)</name>
    <dbReference type="NCBI Taxonomy" id="632772"/>
    <lineage>
        <taxon>Bacteria</taxon>
        <taxon>Bacillati</taxon>
        <taxon>Actinomycetota</taxon>
        <taxon>Actinomycetes</taxon>
        <taxon>Mycobacteriales</taxon>
        <taxon>Nocardiaceae</taxon>
        <taxon>Rhodococcus</taxon>
    </lineage>
</organism>
<reference key="1">
    <citation type="submission" date="2009-03" db="EMBL/GenBank/DDBJ databases">
        <title>Comparison of the complete genome sequences of Rhodococcus erythropolis PR4 and Rhodococcus opacus B4.</title>
        <authorList>
            <person name="Takarada H."/>
            <person name="Sekine M."/>
            <person name="Hosoyama A."/>
            <person name="Yamada R."/>
            <person name="Fujisawa T."/>
            <person name="Omata S."/>
            <person name="Shimizu A."/>
            <person name="Tsukatani N."/>
            <person name="Tanikawa S."/>
            <person name="Fujita N."/>
            <person name="Harayama S."/>
        </authorList>
    </citation>
    <scope>NUCLEOTIDE SEQUENCE [LARGE SCALE GENOMIC DNA]</scope>
    <source>
        <strain>B4</strain>
    </source>
</reference>